<comment type="function">
    <text evidence="1">GTPase that plays an essential role in the late steps of ribosome biogenesis.</text>
</comment>
<comment type="subunit">
    <text evidence="1">Associates with the 50S ribosomal subunit.</text>
</comment>
<comment type="similarity">
    <text evidence="1">Belongs to the TRAFAC class TrmE-Era-EngA-EngB-Septin-like GTPase superfamily. EngA (Der) GTPase family.</text>
</comment>
<evidence type="ECO:0000255" key="1">
    <source>
        <dbReference type="HAMAP-Rule" id="MF_00195"/>
    </source>
</evidence>
<reference key="1">
    <citation type="submission" date="2006-08" db="EMBL/GenBank/DDBJ databases">
        <title>Complete sequence of chromosome 1 of Shewanella sp. MR-7.</title>
        <authorList>
            <person name="Copeland A."/>
            <person name="Lucas S."/>
            <person name="Lapidus A."/>
            <person name="Barry K."/>
            <person name="Detter J.C."/>
            <person name="Glavina del Rio T."/>
            <person name="Hammon N."/>
            <person name="Israni S."/>
            <person name="Dalin E."/>
            <person name="Tice H."/>
            <person name="Pitluck S."/>
            <person name="Kiss H."/>
            <person name="Brettin T."/>
            <person name="Bruce D."/>
            <person name="Han C."/>
            <person name="Tapia R."/>
            <person name="Gilna P."/>
            <person name="Schmutz J."/>
            <person name="Larimer F."/>
            <person name="Land M."/>
            <person name="Hauser L."/>
            <person name="Kyrpides N."/>
            <person name="Mikhailova N."/>
            <person name="Nealson K."/>
            <person name="Konstantinidis K."/>
            <person name="Klappenbach J."/>
            <person name="Tiedje J."/>
            <person name="Richardson P."/>
        </authorList>
    </citation>
    <scope>NUCLEOTIDE SEQUENCE [LARGE SCALE GENOMIC DNA]</scope>
    <source>
        <strain>MR-7</strain>
    </source>
</reference>
<protein>
    <recommendedName>
        <fullName evidence="1">GTPase Der</fullName>
    </recommendedName>
    <alternativeName>
        <fullName evidence="1">GTP-binding protein EngA</fullName>
    </alternativeName>
</protein>
<sequence length="488" mass="54632">MIPVVALVGRPNVGKSTLFNRLTRTRDALVADFPGLTRDRKYGRAFLSGYEFIVVDTGGIDGTEEGIETKMAEQSLAAIEEADVVLFMTDARAGLTAADLSIAQHLRSRQKTTFVVANKIDGIDADSACAEFWSLGLGEVYQMAAAQGRGVTNMIEYALTPYAEAMGIERQGEEEEVDERQYTEEEAEAEQKRLQDLPIKLAIIGKPNVGKSTLTNRILGEERVVVYDEPGTTRDSIYIPMERDGREYVIIDTAGVRRRSKVHEVIEKFSVIKTLKAVEDANVVLLIIDAREGVAEQDLGLLGFALNAGRALVIAVNKWDGIDQGIKDRVKSELDRRLGFIDFARIHFISALHGTGVGHLFESIEEAYDSATRRVSTSMLTRIMQMSQDDHQPPLVNGRRVKLKYAHAGGYNPPIVVIHGNQVSKLPDSYKRYMMNYFRRSLKVVGTPIQLRFQEGDNPFENKVEKLTMSQERRRKRALSHIKDRKTK</sequence>
<gene>
    <name evidence="1" type="primary">der</name>
    <name type="synonym">engA</name>
    <name type="ordered locus">Shewmr7_1303</name>
</gene>
<accession>Q0HX53</accession>
<proteinExistence type="inferred from homology"/>
<keyword id="KW-0342">GTP-binding</keyword>
<keyword id="KW-0547">Nucleotide-binding</keyword>
<keyword id="KW-0677">Repeat</keyword>
<keyword id="KW-0690">Ribosome biogenesis</keyword>
<feature type="chain" id="PRO_1000011740" description="GTPase Der">
    <location>
        <begin position="1"/>
        <end position="488"/>
    </location>
</feature>
<feature type="domain" description="EngA-type G 1">
    <location>
        <begin position="3"/>
        <end position="166"/>
    </location>
</feature>
<feature type="domain" description="EngA-type G 2">
    <location>
        <begin position="199"/>
        <end position="372"/>
    </location>
</feature>
<feature type="domain" description="KH-like" evidence="1">
    <location>
        <begin position="373"/>
        <end position="457"/>
    </location>
</feature>
<feature type="binding site" evidence="1">
    <location>
        <begin position="9"/>
        <end position="16"/>
    </location>
    <ligand>
        <name>GTP</name>
        <dbReference type="ChEBI" id="CHEBI:37565"/>
        <label>1</label>
    </ligand>
</feature>
<feature type="binding site" evidence="1">
    <location>
        <begin position="56"/>
        <end position="60"/>
    </location>
    <ligand>
        <name>GTP</name>
        <dbReference type="ChEBI" id="CHEBI:37565"/>
        <label>1</label>
    </ligand>
</feature>
<feature type="binding site" evidence="1">
    <location>
        <begin position="118"/>
        <end position="121"/>
    </location>
    <ligand>
        <name>GTP</name>
        <dbReference type="ChEBI" id="CHEBI:37565"/>
        <label>1</label>
    </ligand>
</feature>
<feature type="binding site" evidence="1">
    <location>
        <begin position="205"/>
        <end position="212"/>
    </location>
    <ligand>
        <name>GTP</name>
        <dbReference type="ChEBI" id="CHEBI:37565"/>
        <label>2</label>
    </ligand>
</feature>
<feature type="binding site" evidence="1">
    <location>
        <begin position="252"/>
        <end position="256"/>
    </location>
    <ligand>
        <name>GTP</name>
        <dbReference type="ChEBI" id="CHEBI:37565"/>
        <label>2</label>
    </ligand>
</feature>
<feature type="binding site" evidence="1">
    <location>
        <begin position="317"/>
        <end position="320"/>
    </location>
    <ligand>
        <name>GTP</name>
        <dbReference type="ChEBI" id="CHEBI:37565"/>
        <label>2</label>
    </ligand>
</feature>
<name>DER_SHESR</name>
<organism>
    <name type="scientific">Shewanella sp. (strain MR-7)</name>
    <dbReference type="NCBI Taxonomy" id="60481"/>
    <lineage>
        <taxon>Bacteria</taxon>
        <taxon>Pseudomonadati</taxon>
        <taxon>Pseudomonadota</taxon>
        <taxon>Gammaproteobacteria</taxon>
        <taxon>Alteromonadales</taxon>
        <taxon>Shewanellaceae</taxon>
        <taxon>Shewanella</taxon>
    </lineage>
</organism>
<dbReference type="EMBL" id="CP000444">
    <property type="protein sequence ID" value="ABI42302.1"/>
    <property type="molecule type" value="Genomic_DNA"/>
</dbReference>
<dbReference type="SMR" id="Q0HX53"/>
<dbReference type="KEGG" id="shm:Shewmr7_1303"/>
<dbReference type="HOGENOM" id="CLU_016077_6_2_6"/>
<dbReference type="GO" id="GO:0005525">
    <property type="term" value="F:GTP binding"/>
    <property type="evidence" value="ECO:0007669"/>
    <property type="project" value="UniProtKB-UniRule"/>
</dbReference>
<dbReference type="GO" id="GO:0043022">
    <property type="term" value="F:ribosome binding"/>
    <property type="evidence" value="ECO:0007669"/>
    <property type="project" value="TreeGrafter"/>
</dbReference>
<dbReference type="GO" id="GO:0042254">
    <property type="term" value="P:ribosome biogenesis"/>
    <property type="evidence" value="ECO:0007669"/>
    <property type="project" value="UniProtKB-KW"/>
</dbReference>
<dbReference type="CDD" id="cd01894">
    <property type="entry name" value="EngA1"/>
    <property type="match status" value="1"/>
</dbReference>
<dbReference type="CDD" id="cd01895">
    <property type="entry name" value="EngA2"/>
    <property type="match status" value="1"/>
</dbReference>
<dbReference type="FunFam" id="3.30.300.20:FF:000004">
    <property type="entry name" value="GTPase Der"/>
    <property type="match status" value="1"/>
</dbReference>
<dbReference type="FunFam" id="3.40.50.300:FF:000040">
    <property type="entry name" value="GTPase Der"/>
    <property type="match status" value="1"/>
</dbReference>
<dbReference type="FunFam" id="3.40.50.300:FF:000057">
    <property type="entry name" value="GTPase Der"/>
    <property type="match status" value="1"/>
</dbReference>
<dbReference type="Gene3D" id="3.30.300.20">
    <property type="match status" value="1"/>
</dbReference>
<dbReference type="Gene3D" id="3.40.50.300">
    <property type="entry name" value="P-loop containing nucleotide triphosphate hydrolases"/>
    <property type="match status" value="2"/>
</dbReference>
<dbReference type="HAMAP" id="MF_00195">
    <property type="entry name" value="GTPase_Der"/>
    <property type="match status" value="1"/>
</dbReference>
<dbReference type="InterPro" id="IPR031166">
    <property type="entry name" value="G_ENGA"/>
</dbReference>
<dbReference type="InterPro" id="IPR006073">
    <property type="entry name" value="GTP-bd"/>
</dbReference>
<dbReference type="InterPro" id="IPR016484">
    <property type="entry name" value="GTPase_Der"/>
</dbReference>
<dbReference type="InterPro" id="IPR032859">
    <property type="entry name" value="KH_dom-like"/>
</dbReference>
<dbReference type="InterPro" id="IPR015946">
    <property type="entry name" value="KH_dom-like_a/b"/>
</dbReference>
<dbReference type="InterPro" id="IPR027417">
    <property type="entry name" value="P-loop_NTPase"/>
</dbReference>
<dbReference type="InterPro" id="IPR005225">
    <property type="entry name" value="Small_GTP-bd"/>
</dbReference>
<dbReference type="NCBIfam" id="TIGR03594">
    <property type="entry name" value="GTPase_EngA"/>
    <property type="match status" value="1"/>
</dbReference>
<dbReference type="NCBIfam" id="TIGR00231">
    <property type="entry name" value="small_GTP"/>
    <property type="match status" value="2"/>
</dbReference>
<dbReference type="PANTHER" id="PTHR43834">
    <property type="entry name" value="GTPASE DER"/>
    <property type="match status" value="1"/>
</dbReference>
<dbReference type="PANTHER" id="PTHR43834:SF6">
    <property type="entry name" value="GTPASE DER"/>
    <property type="match status" value="1"/>
</dbReference>
<dbReference type="Pfam" id="PF14714">
    <property type="entry name" value="KH_dom-like"/>
    <property type="match status" value="1"/>
</dbReference>
<dbReference type="Pfam" id="PF01926">
    <property type="entry name" value="MMR_HSR1"/>
    <property type="match status" value="2"/>
</dbReference>
<dbReference type="PIRSF" id="PIRSF006485">
    <property type="entry name" value="GTP-binding_EngA"/>
    <property type="match status" value="1"/>
</dbReference>
<dbReference type="PRINTS" id="PR00326">
    <property type="entry name" value="GTP1OBG"/>
</dbReference>
<dbReference type="SUPFAM" id="SSF52540">
    <property type="entry name" value="P-loop containing nucleoside triphosphate hydrolases"/>
    <property type="match status" value="2"/>
</dbReference>
<dbReference type="PROSITE" id="PS51712">
    <property type="entry name" value="G_ENGA"/>
    <property type="match status" value="2"/>
</dbReference>